<protein>
    <recommendedName>
        <fullName>Sulfate permease 2, chloroplastic</fullName>
    </recommendedName>
</protein>
<gene>
    <name type="primary">SULP2</name>
    <name type="ORF">CHLREDRAFT_116547</name>
</gene>
<dbReference type="EMBL" id="AY536251">
    <property type="protein sequence ID" value="AAS20262.1"/>
    <property type="molecule type" value="mRNA"/>
</dbReference>
<dbReference type="EMBL" id="DS496108">
    <property type="protein sequence ID" value="EDP10015.1"/>
    <property type="status" value="ALT_SEQ"/>
    <property type="molecule type" value="Genomic_DNA"/>
</dbReference>
<dbReference type="SMR" id="Q6QJE2"/>
<dbReference type="TCDB" id="3.A.1.6.7">
    <property type="family name" value="the atp-binding cassette (abc) superfamily"/>
</dbReference>
<dbReference type="PaxDb" id="3055-EDP10015"/>
<dbReference type="eggNOG" id="ENOG502S1HK">
    <property type="taxonomic scope" value="Eukaryota"/>
</dbReference>
<dbReference type="HOGENOM" id="CLU_016047_14_0_1"/>
<dbReference type="BioCyc" id="CHLAMY:CHLREDRAFT_116547-MONOMER"/>
<dbReference type="GO" id="GO:0031969">
    <property type="term" value="C:chloroplast membrane"/>
    <property type="evidence" value="ECO:0007669"/>
    <property type="project" value="UniProtKB-SubCell"/>
</dbReference>
<dbReference type="GO" id="GO:0005886">
    <property type="term" value="C:plasma membrane"/>
    <property type="evidence" value="ECO:0007669"/>
    <property type="project" value="InterPro"/>
</dbReference>
<dbReference type="GO" id="GO:0015419">
    <property type="term" value="F:ABC-type sulfate transporter activity"/>
    <property type="evidence" value="ECO:0007669"/>
    <property type="project" value="InterPro"/>
</dbReference>
<dbReference type="CDD" id="cd06261">
    <property type="entry name" value="TM_PBP2"/>
    <property type="match status" value="1"/>
</dbReference>
<dbReference type="Gene3D" id="1.10.3720.10">
    <property type="entry name" value="MetI-like"/>
    <property type="match status" value="1"/>
</dbReference>
<dbReference type="InterPro" id="IPR011866">
    <property type="entry name" value="CysW_permease"/>
</dbReference>
<dbReference type="InterPro" id="IPR000515">
    <property type="entry name" value="MetI-like"/>
</dbReference>
<dbReference type="InterPro" id="IPR035906">
    <property type="entry name" value="MetI-like_sf"/>
</dbReference>
<dbReference type="InterPro" id="IPR005667">
    <property type="entry name" value="Sulph_transpt2"/>
</dbReference>
<dbReference type="NCBIfam" id="TIGR00969">
    <property type="entry name" value="3a0106s02"/>
    <property type="match status" value="1"/>
</dbReference>
<dbReference type="NCBIfam" id="TIGR02140">
    <property type="entry name" value="permease_CysW"/>
    <property type="match status" value="1"/>
</dbReference>
<dbReference type="PANTHER" id="PTHR30406">
    <property type="entry name" value="SULFATE TRANSPORT SYSTEM PERMEASE PROTEIN"/>
    <property type="match status" value="1"/>
</dbReference>
<dbReference type="PANTHER" id="PTHR30406:SF1">
    <property type="entry name" value="SULFATE TRANSPORT SYSTEM PERMEASE PROTEIN CYSW"/>
    <property type="match status" value="1"/>
</dbReference>
<dbReference type="Pfam" id="PF00528">
    <property type="entry name" value="BPD_transp_1"/>
    <property type="match status" value="1"/>
</dbReference>
<dbReference type="SUPFAM" id="SSF161098">
    <property type="entry name" value="MetI-like"/>
    <property type="match status" value="1"/>
</dbReference>
<dbReference type="PROSITE" id="PS50928">
    <property type="entry name" value="ABC_TM1"/>
    <property type="match status" value="1"/>
</dbReference>
<keyword id="KW-0150">Chloroplast</keyword>
<keyword id="KW-0472">Membrane</keyword>
<keyword id="KW-0934">Plastid</keyword>
<keyword id="KW-0764">Sulfate transport</keyword>
<keyword id="KW-0809">Transit peptide</keyword>
<keyword id="KW-0812">Transmembrane</keyword>
<keyword id="KW-1133">Transmembrane helix</keyword>
<keyword id="KW-0813">Transport</keyword>
<name>SULP2_CHLRE</name>
<evidence type="ECO:0000250" key="1"/>
<evidence type="ECO:0000255" key="2"/>
<evidence type="ECO:0000255" key="3">
    <source>
        <dbReference type="PROSITE-ProRule" id="PRU00441"/>
    </source>
</evidence>
<evidence type="ECO:0000256" key="4">
    <source>
        <dbReference type="SAM" id="MobiDB-lite"/>
    </source>
</evidence>
<evidence type="ECO:0000269" key="5">
    <source>
    </source>
</evidence>
<evidence type="ECO:0000269" key="6">
    <source>
    </source>
</evidence>
<evidence type="ECO:0000305" key="7"/>
<comment type="function">
    <text evidence="5 6">Part of the ABC-type chloroplast envelope-localized sulfate transporter.</text>
</comment>
<comment type="subunit">
    <text evidence="5 6">Part of the chloroplast sulfate permease holocomplex. May form a heterodimer with SLUP1.</text>
</comment>
<comment type="subcellular location">
    <subcellularLocation>
        <location evidence="1">Plastid</location>
        <location evidence="1">Chloroplast membrane</location>
        <topology evidence="3">Multi-pass membrane protein</topology>
    </subcellularLocation>
</comment>
<comment type="induction">
    <text evidence="6">Up-regulated by sulfate deprivation.</text>
</comment>
<comment type="similarity">
    <text evidence="7">Belongs to the ATP-binding cassette (ABC) (TC 3.A.1) superfamily.</text>
</comment>
<comment type="sequence caution" evidence="7">
    <conflict type="erroneous gene model prediction">
        <sequence resource="EMBL-CDS" id="EDP10015"/>
    </conflict>
</comment>
<reference key="1">
    <citation type="journal article" date="2004" name="Planta">
        <title>Localization and function of SulP, a nuclear-encoded chloroplast sulfate permease in Chlamydomonas reinhardtii.</title>
        <authorList>
            <person name="Chen H.C."/>
            <person name="Melis A."/>
        </authorList>
    </citation>
    <scope>NUCLEOTIDE SEQUENCE [MRNA]</scope>
</reference>
<reference key="2">
    <citation type="journal article" date="2007" name="Science">
        <title>The Chlamydomonas genome reveals the evolution of key animal and plant functions.</title>
        <authorList>
            <person name="Merchant S.S."/>
            <person name="Prochnik S.E."/>
            <person name="Vallon O."/>
            <person name="Harris E.H."/>
            <person name="Karpowicz S.J."/>
            <person name="Witman G.B."/>
            <person name="Terry A."/>
            <person name="Salamov A."/>
            <person name="Fritz-Laylin L.K."/>
            <person name="Marechal-Drouard L."/>
            <person name="Marshall W.F."/>
            <person name="Qu L.H."/>
            <person name="Nelson D.R."/>
            <person name="Sanderfoot A.A."/>
            <person name="Spalding M.H."/>
            <person name="Kapitonov V.V."/>
            <person name="Ren Q."/>
            <person name="Ferris P."/>
            <person name="Lindquist E."/>
            <person name="Shapiro H."/>
            <person name="Lucas S.M."/>
            <person name="Grimwood J."/>
            <person name="Schmutz J."/>
            <person name="Cardol P."/>
            <person name="Cerutti H."/>
            <person name="Chanfreau G."/>
            <person name="Chen C.L."/>
            <person name="Cognat V."/>
            <person name="Croft M.T."/>
            <person name="Dent R."/>
            <person name="Dutcher S."/>
            <person name="Fernandez E."/>
            <person name="Fukuzawa H."/>
            <person name="Gonzalez-Ballester D."/>
            <person name="Gonzalez-Halphen D."/>
            <person name="Hallmann A."/>
            <person name="Hanikenne M."/>
            <person name="Hippler M."/>
            <person name="Inwood W."/>
            <person name="Jabbari K."/>
            <person name="Kalanon M."/>
            <person name="Kuras R."/>
            <person name="Lefebvre P.A."/>
            <person name="Lemaire S.D."/>
            <person name="Lobanov A.V."/>
            <person name="Lohr M."/>
            <person name="Manuell A."/>
            <person name="Meier I."/>
            <person name="Mets L."/>
            <person name="Mittag M."/>
            <person name="Mittelmeier T."/>
            <person name="Moroney J.V."/>
            <person name="Moseley J."/>
            <person name="Napoli C."/>
            <person name="Nedelcu A.M."/>
            <person name="Niyogi K."/>
            <person name="Novoselov S.V."/>
            <person name="Paulsen I.T."/>
            <person name="Pazour G.J."/>
            <person name="Purton S."/>
            <person name="Ral J.P."/>
            <person name="Riano-Pachon D.M."/>
            <person name="Riekhof W."/>
            <person name="Rymarquis L."/>
            <person name="Schroda M."/>
            <person name="Stern D."/>
            <person name="Umen J."/>
            <person name="Willows R."/>
            <person name="Wilson N."/>
            <person name="Zimmer S.L."/>
            <person name="Allmer J."/>
            <person name="Balk J."/>
            <person name="Bisova K."/>
            <person name="Chen C.J."/>
            <person name="Elias M."/>
            <person name="Gendler K."/>
            <person name="Hauser C."/>
            <person name="Lamb M.R."/>
            <person name="Ledford H."/>
            <person name="Long J.C."/>
            <person name="Minagawa J."/>
            <person name="Page M.D."/>
            <person name="Pan J."/>
            <person name="Pootakham W."/>
            <person name="Roje S."/>
            <person name="Rose A."/>
            <person name="Stahlberg E."/>
            <person name="Terauchi A.M."/>
            <person name="Yang P."/>
            <person name="Ball S."/>
            <person name="Bowler C."/>
            <person name="Dieckmann C.L."/>
            <person name="Gladyshev V.N."/>
            <person name="Green P."/>
            <person name="Jorgensen R."/>
            <person name="Mayfield S."/>
            <person name="Mueller-Roeber B."/>
            <person name="Rajamani S."/>
            <person name="Sayre R.T."/>
            <person name="Brokstein P."/>
            <person name="Dubchak I."/>
            <person name="Goodstein D."/>
            <person name="Hornick L."/>
            <person name="Huang Y.W."/>
            <person name="Jhaveri J."/>
            <person name="Luo Y."/>
            <person name="Martinez D."/>
            <person name="Ngau W.C."/>
            <person name="Otillar B."/>
            <person name="Poliakov A."/>
            <person name="Porter A."/>
            <person name="Szajkowski L."/>
            <person name="Werner G."/>
            <person name="Zhou K."/>
            <person name="Grigoriev I.V."/>
            <person name="Rokhsar D.S."/>
            <person name="Grossman A.R."/>
        </authorList>
    </citation>
    <scope>NUCLEOTIDE SEQUENCE [LARGE SCALE GENOMIC DNA]</scope>
    <source>
        <strain>CC-503</strain>
    </source>
</reference>
<reference key="3">
    <citation type="journal article" date="2005" name="Photosyn. Res.">
        <title>Chloroplast sulfate transport in green algae--genes, proteins and effects.</title>
        <authorList>
            <person name="Melis A."/>
            <person name="Chen H.C."/>
        </authorList>
    </citation>
    <scope>FUNCTION</scope>
    <scope>SUBUNIT</scope>
</reference>
<reference key="4">
    <citation type="journal article" date="2008" name="Planta">
        <title>The chloroplast sulfate transport system in the green alga Chlamydomonas reinhardtii.</title>
        <authorList>
            <person name="Lindberg P."/>
            <person name="Melis A."/>
        </authorList>
    </citation>
    <scope>FUNCTION</scope>
    <scope>INDUCTION</scope>
    <scope>SUBUNIT</scope>
</reference>
<sequence>MASTTLLQPALGLPSRVGPRSPLSLPKIPRVCTHTSAPSTSKYCDSSSVIESTLGRQTSVAGRPWLAPRPAPQQSRGDLLVSKSGAAGGMGAHGGGLGEPVDNWIKKLLVGVAAAYIGLVVLVPFLNVFVQAFAKGIIPFLEHCADPDFLHALKMTLMLAFVTVPLNTVFGTVAAINLTRNEFPGKVFLMSLLDLPFSISPVVTGLMLTLLYGRTGWFAALLRETGINVVFAFTGMALATMFVTLPFVVRELIPILENMDLSQEEAARTLGANDWQVFWNVTLPNIRWGLLYGVILCNARAMGEFGAVSVISGNIIGRTQTLTLFVESAYKEYNTEAAFAAAVLLSALALGTLWIKDKVEEAAAAESRK</sequence>
<accession>Q6QJE2</accession>
<accession>A8HNS9</accession>
<proteinExistence type="evidence at protein level"/>
<feature type="transit peptide" description="Chloroplast" evidence="2">
    <location>
        <begin position="1"/>
        <end position="82"/>
    </location>
</feature>
<feature type="chain" id="PRO_0000418414" description="Sulfate permease 2, chloroplastic">
    <location>
        <begin position="83"/>
        <end position="369"/>
    </location>
</feature>
<feature type="transmembrane region" description="Helical" evidence="3">
    <location>
        <begin position="110"/>
        <end position="130"/>
    </location>
</feature>
<feature type="transmembrane region" description="Helical" evidence="3">
    <location>
        <begin position="156"/>
        <end position="176"/>
    </location>
</feature>
<feature type="transmembrane region" description="Helical" evidence="3">
    <location>
        <begin position="187"/>
        <end position="207"/>
    </location>
</feature>
<feature type="transmembrane region" description="Helical" evidence="3">
    <location>
        <begin position="229"/>
        <end position="249"/>
    </location>
</feature>
<feature type="transmembrane region" description="Helical" evidence="3">
    <location>
        <begin position="335"/>
        <end position="355"/>
    </location>
</feature>
<feature type="domain" description="ABC transmembrane type-1" evidence="3">
    <location>
        <begin position="153"/>
        <end position="356"/>
    </location>
</feature>
<feature type="region of interest" description="Disordered" evidence="4">
    <location>
        <begin position="1"/>
        <end position="21"/>
    </location>
</feature>
<organism>
    <name type="scientific">Chlamydomonas reinhardtii</name>
    <name type="common">Chlamydomonas smithii</name>
    <dbReference type="NCBI Taxonomy" id="3055"/>
    <lineage>
        <taxon>Eukaryota</taxon>
        <taxon>Viridiplantae</taxon>
        <taxon>Chlorophyta</taxon>
        <taxon>core chlorophytes</taxon>
        <taxon>Chlorophyceae</taxon>
        <taxon>CS clade</taxon>
        <taxon>Chlamydomonadales</taxon>
        <taxon>Chlamydomonadaceae</taxon>
        <taxon>Chlamydomonas</taxon>
    </lineage>
</organism>